<sequence>MTAATSVQPSPAPRQPGLRATFNPRKEEKVFLARGAHAFTLPGRRASVNVEVDVEAESDEAALDAKETTITVSYAEKGQESSWSAAKWIKLDRLAKTSQHGVVNEDRATYQQAWSLELLDEAVEPARAIWSALYAFWIRHKRSDRLAVLLKGTQATKVRSYVFEAGLGFKSPCETDLILLDRNAFWQGAGAPAGLHWLQTPVPTRGLFPYVLDFTQSTSPPVLATHPLRPPKPAPGSVVYSRYVFSCSQHLELVHIDVSNPQHFDAYTRWQNSDRVNHGWREKGSDEKHRKYITEKNDDPHAMGVLVLWDGVPAGYGEMVWSKEDGMAAFVGGLGNYDQGTHLLIGEEQFRGKHRFTACMVSLKHACFLRDPRTEVVVGEPRYDLDIIPLLATFLPQEIRKEVELPHKRAVFFVLRRDRFLEEGILE</sequence>
<accession>Q4PEN1</accession>
<accession>A1A656</accession>
<organism>
    <name type="scientific">Mycosarcoma maydis</name>
    <name type="common">Corn smut fungus</name>
    <name type="synonym">Ustilago maydis</name>
    <dbReference type="NCBI Taxonomy" id="5270"/>
    <lineage>
        <taxon>Eukaryota</taxon>
        <taxon>Fungi</taxon>
        <taxon>Dikarya</taxon>
        <taxon>Basidiomycota</taxon>
        <taxon>Ustilaginomycotina</taxon>
        <taxon>Ustilaginomycetes</taxon>
        <taxon>Ustilaginales</taxon>
        <taxon>Ustilaginaceae</taxon>
        <taxon>Mycosarcoma</taxon>
    </lineage>
</organism>
<reference key="1">
    <citation type="journal article" date="2006" name="Nature">
        <title>Insights from the genome of the biotrophic fungal plant pathogen Ustilago maydis.</title>
        <authorList>
            <person name="Kaemper J."/>
            <person name="Kahmann R."/>
            <person name="Boelker M."/>
            <person name="Ma L.-J."/>
            <person name="Brefort T."/>
            <person name="Saville B.J."/>
            <person name="Banuett F."/>
            <person name="Kronstad J.W."/>
            <person name="Gold S.E."/>
            <person name="Mueller O."/>
            <person name="Perlin M.H."/>
            <person name="Woesten H.A.B."/>
            <person name="de Vries R."/>
            <person name="Ruiz-Herrera J."/>
            <person name="Reynaga-Pena C.G."/>
            <person name="Snetselaar K."/>
            <person name="McCann M."/>
            <person name="Perez-Martin J."/>
            <person name="Feldbruegge M."/>
            <person name="Basse C.W."/>
            <person name="Steinberg G."/>
            <person name="Ibeas J.I."/>
            <person name="Holloman W."/>
            <person name="Guzman P."/>
            <person name="Farman M.L."/>
            <person name="Stajich J.E."/>
            <person name="Sentandreu R."/>
            <person name="Gonzalez-Prieto J.M."/>
            <person name="Kennell J.C."/>
            <person name="Molina L."/>
            <person name="Schirawski J."/>
            <person name="Mendoza-Mendoza A."/>
            <person name="Greilinger D."/>
            <person name="Muench K."/>
            <person name="Roessel N."/>
            <person name="Scherer M."/>
            <person name="Vranes M."/>
            <person name="Ladendorf O."/>
            <person name="Vincon V."/>
            <person name="Fuchs U."/>
            <person name="Sandrock B."/>
            <person name="Meng S."/>
            <person name="Ho E.C.H."/>
            <person name="Cahill M.J."/>
            <person name="Boyce K.J."/>
            <person name="Klose J."/>
            <person name="Klosterman S.J."/>
            <person name="Deelstra H.J."/>
            <person name="Ortiz-Castellanos L."/>
            <person name="Li W."/>
            <person name="Sanchez-Alonso P."/>
            <person name="Schreier P.H."/>
            <person name="Haeuser-Hahn I."/>
            <person name="Vaupel M."/>
            <person name="Koopmann E."/>
            <person name="Friedrich G."/>
            <person name="Voss H."/>
            <person name="Schlueter T."/>
            <person name="Margolis J."/>
            <person name="Platt D."/>
            <person name="Swimmer C."/>
            <person name="Gnirke A."/>
            <person name="Chen F."/>
            <person name="Vysotskaia V."/>
            <person name="Mannhaupt G."/>
            <person name="Gueldener U."/>
            <person name="Muensterkoetter M."/>
            <person name="Haase D."/>
            <person name="Oesterheld M."/>
            <person name="Mewes H.-W."/>
            <person name="Mauceli E.W."/>
            <person name="DeCaprio D."/>
            <person name="Wade C.M."/>
            <person name="Butler J."/>
            <person name="Young S.K."/>
            <person name="Jaffe D.B."/>
            <person name="Calvo S.E."/>
            <person name="Nusbaum C."/>
            <person name="Galagan J.E."/>
            <person name="Birren B.W."/>
        </authorList>
    </citation>
    <scope>NUCLEOTIDE SEQUENCE [LARGE SCALE GENOMIC DNA]</scope>
    <source>
        <strain>DSM 14603 / FGSC 9021 / UM521</strain>
    </source>
</reference>
<reference key="2">
    <citation type="submission" date="2014-09" db="EMBL/GenBank/DDBJ databases">
        <authorList>
            <person name="Gueldener U."/>
            <person name="Muensterkoetter M."/>
            <person name="Walter M.C."/>
            <person name="Mannhaupt G."/>
            <person name="Kahmann R."/>
        </authorList>
    </citation>
    <scope>GENOME REANNOTATION</scope>
    <source>
        <strain>DSM 14603 / FGSC 9021 / UM521</strain>
    </source>
</reference>
<reference key="3">
    <citation type="journal article" date="2006" name="Plant Cell">
        <title>A ferroxidation/permeation iron uptake system is required for virulence in Ustilago maydis.</title>
        <authorList>
            <person name="Eichhorn H."/>
            <person name="Lessing F."/>
            <person name="Winterberg B."/>
            <person name="Schirawski J."/>
            <person name="Kamper J."/>
            <person name="Muller P."/>
            <person name="Kahmann R."/>
        </authorList>
    </citation>
    <scope>INDUCTION</scope>
    <scope>FUNCTION</scope>
    <source>
        <strain>DSM 14603 / FGSC 9021 / UM521</strain>
    </source>
</reference>
<reference key="4">
    <citation type="journal article" date="2010" name="Mol. Microbiol.">
        <title>Elucidation of the complete ferrichrome A biosynthetic pathway in Ustilago maydis.</title>
        <authorList>
            <person name="Winterberg B."/>
            <person name="Uhlmann S."/>
            <person name="Linne U."/>
            <person name="Lessing F."/>
            <person name="Marahiel M.A."/>
            <person name="Eichhorn H."/>
            <person name="Kahmann R."/>
            <person name="Schirawski J."/>
        </authorList>
    </citation>
    <scope>FUNCTION</scope>
    <scope>DISRUPTION PHENOTYPE</scope>
    <scope>CATALYTIC ACTIVITY</scope>
</reference>
<comment type="function">
    <text evidence="3 4">Acyltransferase; part of the gene cluster that mediates the biosynthesis of siderophore ferrichrome A which is contributing to organismal virulence (PubMed:17138696, PubMed:20070524). The first step of ferrichrome A biosynthesis is performed by the HMG-CoA synthase hcs1 which catalyzes the generation of HMG-CoA and CoA using acetoacetyl-CoA and acetyl-CoA as substrates (PubMed:20070524). The enoyl-CoA isomerase/hydratase fer4 then catalyzes the conversion of hcs1-produced HMG-CoA to methylglutaconyl-CoA (PubMed:20070524). The acyltransferase fer5 then fuses the fer4-generated methylglutaconyl-CoA with sid1-generated hydroxyornithine to yield methylglutaconyl hydroxyornithine (PubMed:20070524). Methylglutaconyl hydroxyornithine is then available for use by the NRPS fer3 to generate ferrichrome A (PubMed:20070524).</text>
</comment>
<comment type="pathway">
    <text evidence="4">Siderophore biosynthesis.</text>
</comment>
<comment type="induction">
    <text evidence="3">Expression regulated by iron through the urbs1 transcription factor (PubMed:17138696).</text>
</comment>
<comment type="disruption phenotype">
    <text evidence="4">Impairs the production of ferrichrome A but does not affect the production of ferrichrome (PubMed:20070524).</text>
</comment>
<comment type="similarity">
    <text evidence="7">Belongs to the lysine N-acyltransferase mbtK family.</text>
</comment>
<evidence type="ECO:0000255" key="1"/>
<evidence type="ECO:0000256" key="2">
    <source>
        <dbReference type="SAM" id="MobiDB-lite"/>
    </source>
</evidence>
<evidence type="ECO:0000269" key="3">
    <source>
    </source>
</evidence>
<evidence type="ECO:0000269" key="4">
    <source>
    </source>
</evidence>
<evidence type="ECO:0000303" key="5">
    <source>
    </source>
</evidence>
<evidence type="ECO:0000303" key="6">
    <source>
    </source>
</evidence>
<evidence type="ECO:0000305" key="7"/>
<proteinExistence type="evidence at protein level"/>
<keyword id="KW-0012">Acyltransferase</keyword>
<keyword id="KW-1185">Reference proteome</keyword>
<keyword id="KW-0808">Transferase</keyword>
<keyword id="KW-0843">Virulence</keyword>
<name>FER5_MYCMD</name>
<protein>
    <recommendedName>
        <fullName evidence="5">Acyltransferase fer5</fullName>
        <ecNumber evidence="4">2.3.-.-</ecNumber>
    </recommendedName>
    <alternativeName>
        <fullName evidence="5">Fe-regulated protein 5</fullName>
    </alternativeName>
    <alternativeName>
        <fullName evidence="6">Ferrichrome A biosynthesis protein fer5</fullName>
    </alternativeName>
</protein>
<feature type="chain" id="PRO_0000441961" description="Acyltransferase fer5">
    <location>
        <begin position="1"/>
        <end position="427"/>
    </location>
</feature>
<feature type="region of interest" description="Disordered" evidence="2">
    <location>
        <begin position="1"/>
        <end position="24"/>
    </location>
</feature>
<feature type="active site" description="Proton acceptor" evidence="1">
    <location>
        <position position="380"/>
    </location>
</feature>
<feature type="binding site" evidence="1">
    <location>
        <position position="342"/>
    </location>
    <ligand>
        <name>substrate</name>
    </ligand>
</feature>
<dbReference type="EC" id="2.3.-.-" evidence="4"/>
<dbReference type="EMBL" id="CM003141">
    <property type="protein sequence ID" value="KIS71539.1"/>
    <property type="molecule type" value="Genomic_DNA"/>
</dbReference>
<dbReference type="EMBL" id="BK004083">
    <property type="protein sequence ID" value="DAA04937.1"/>
    <property type="molecule type" value="Genomic_DNA"/>
</dbReference>
<dbReference type="RefSeq" id="XP_011387301.1">
    <property type="nucleotide sequence ID" value="XM_011388999.1"/>
</dbReference>
<dbReference type="SMR" id="Q4PEN1"/>
<dbReference type="STRING" id="237631.Q4PEN1"/>
<dbReference type="EnsemblFungi" id="KIS71539">
    <property type="protein sequence ID" value="KIS71539"/>
    <property type="gene ID" value="UMAG_01432"/>
</dbReference>
<dbReference type="GeneID" id="23562456"/>
<dbReference type="KEGG" id="uma:UMAG_01432"/>
<dbReference type="VEuPathDB" id="FungiDB:UMAG_01432"/>
<dbReference type="eggNOG" id="ENOG502RZMI">
    <property type="taxonomic scope" value="Eukaryota"/>
</dbReference>
<dbReference type="HOGENOM" id="CLU_039848_7_0_1"/>
<dbReference type="InParanoid" id="Q4PEN1"/>
<dbReference type="OMA" id="GQIWNVI"/>
<dbReference type="OrthoDB" id="4250781at2759"/>
<dbReference type="BioCyc" id="MetaCyc:MONOMER-18965"/>
<dbReference type="Proteomes" id="UP000000561">
    <property type="component" value="Chromosome 2"/>
</dbReference>
<dbReference type="GO" id="GO:0016410">
    <property type="term" value="F:N-acyltransferase activity"/>
    <property type="evidence" value="ECO:0000318"/>
    <property type="project" value="GO_Central"/>
</dbReference>
<dbReference type="GO" id="GO:0019290">
    <property type="term" value="P:siderophore biosynthetic process"/>
    <property type="evidence" value="ECO:0007669"/>
    <property type="project" value="InterPro"/>
</dbReference>
<dbReference type="Gene3D" id="3.40.630.30">
    <property type="match status" value="1"/>
</dbReference>
<dbReference type="InterPro" id="IPR016181">
    <property type="entry name" value="Acyl_CoA_acyltransferase"/>
</dbReference>
<dbReference type="InterPro" id="IPR019432">
    <property type="entry name" value="Acyltransferase_MbtK/IucB-like"/>
</dbReference>
<dbReference type="PANTHER" id="PTHR31438">
    <property type="entry name" value="LYSINE N-ACYLTRANSFERASE C17G9.06C-RELATED"/>
    <property type="match status" value="1"/>
</dbReference>
<dbReference type="PANTHER" id="PTHR31438:SF1">
    <property type="entry name" value="LYSINE N-ACYLTRANSFERASE C17G9.06C-RELATED"/>
    <property type="match status" value="1"/>
</dbReference>
<dbReference type="Pfam" id="PF13523">
    <property type="entry name" value="Acetyltransf_8"/>
    <property type="match status" value="1"/>
</dbReference>
<dbReference type="SMART" id="SM01006">
    <property type="entry name" value="AlcB"/>
    <property type="match status" value="1"/>
</dbReference>
<dbReference type="SUPFAM" id="SSF55729">
    <property type="entry name" value="Acyl-CoA N-acyltransferases (Nat)"/>
    <property type="match status" value="1"/>
</dbReference>
<gene>
    <name evidence="5" type="primary">fer5</name>
    <name type="ORF">UMAG_01432</name>
</gene>